<dbReference type="EC" id="1.14.11.15"/>
<dbReference type="EMBL" id="AL035527">
    <property type="protein sequence ID" value="CAB36813.1"/>
    <property type="molecule type" value="Genomic_DNA"/>
</dbReference>
<dbReference type="EMBL" id="AL161555">
    <property type="protein sequence ID" value="CAB81276.1"/>
    <property type="molecule type" value="Genomic_DNA"/>
</dbReference>
<dbReference type="EMBL" id="CP002687">
    <property type="protein sequence ID" value="AEE84490.1"/>
    <property type="molecule type" value="Genomic_DNA"/>
</dbReference>
<dbReference type="EMBL" id="DQ446858">
    <property type="protein sequence ID" value="ABE66082.1"/>
    <property type="molecule type" value="mRNA"/>
</dbReference>
<dbReference type="EMBL" id="DQ653214">
    <property type="protein sequence ID" value="ABK28643.1"/>
    <property type="status" value="ALT_SEQ"/>
    <property type="molecule type" value="mRNA"/>
</dbReference>
<dbReference type="PIR" id="T05844">
    <property type="entry name" value="T05844"/>
</dbReference>
<dbReference type="RefSeq" id="NP_193900.1">
    <property type="nucleotide sequence ID" value="NM_118289.1"/>
</dbReference>
<dbReference type="SMR" id="Q9SVS8"/>
<dbReference type="BioGRID" id="13545">
    <property type="interactions" value="1"/>
</dbReference>
<dbReference type="FunCoup" id="Q9SVS8">
    <property type="interactions" value="20"/>
</dbReference>
<dbReference type="STRING" id="3702.Q9SVS8"/>
<dbReference type="PaxDb" id="3702-AT4G21690.1"/>
<dbReference type="EnsemblPlants" id="AT4G21690.1">
    <property type="protein sequence ID" value="AT4G21690.1"/>
    <property type="gene ID" value="AT4G21690"/>
</dbReference>
<dbReference type="GeneID" id="828256"/>
<dbReference type="Gramene" id="AT4G21690.1">
    <property type="protein sequence ID" value="AT4G21690.1"/>
    <property type="gene ID" value="AT4G21690"/>
</dbReference>
<dbReference type="KEGG" id="ath:AT4G21690"/>
<dbReference type="Araport" id="AT4G21690"/>
<dbReference type="TAIR" id="AT4G21690">
    <property type="gene designation" value="GA3OX3"/>
</dbReference>
<dbReference type="eggNOG" id="KOG0143">
    <property type="taxonomic scope" value="Eukaryota"/>
</dbReference>
<dbReference type="HOGENOM" id="CLU_010119_16_3_1"/>
<dbReference type="InParanoid" id="Q9SVS8"/>
<dbReference type="OMA" id="KNLQIGP"/>
<dbReference type="PhylomeDB" id="Q9SVS8"/>
<dbReference type="BioCyc" id="ARA:AT4G21690-MONOMER"/>
<dbReference type="UniPathway" id="UPA00390"/>
<dbReference type="PRO" id="PR:Q9SVS8"/>
<dbReference type="Proteomes" id="UP000006548">
    <property type="component" value="Chromosome 4"/>
</dbReference>
<dbReference type="ExpressionAtlas" id="Q9SVS8">
    <property type="expression patterns" value="baseline and differential"/>
</dbReference>
<dbReference type="GO" id="GO:0016707">
    <property type="term" value="F:gibberellin 3-beta-dioxygenase activity"/>
    <property type="evidence" value="ECO:0007669"/>
    <property type="project" value="UniProtKB-EC"/>
</dbReference>
<dbReference type="GO" id="GO:0046872">
    <property type="term" value="F:metal ion binding"/>
    <property type="evidence" value="ECO:0007669"/>
    <property type="project" value="UniProtKB-KW"/>
</dbReference>
<dbReference type="GO" id="GO:0009686">
    <property type="term" value="P:gibberellin biosynthetic process"/>
    <property type="evidence" value="ECO:0007669"/>
    <property type="project" value="UniProtKB-UniPathway"/>
</dbReference>
<dbReference type="FunFam" id="2.60.120.330:FF:000013">
    <property type="entry name" value="Gibberellin 3-beta-dioxygenase 1"/>
    <property type="match status" value="1"/>
</dbReference>
<dbReference type="Gene3D" id="2.60.120.330">
    <property type="entry name" value="B-lactam Antibiotic, Isopenicillin N Synthase, Chain"/>
    <property type="match status" value="1"/>
</dbReference>
<dbReference type="InterPro" id="IPR026992">
    <property type="entry name" value="DIOX_N"/>
</dbReference>
<dbReference type="InterPro" id="IPR044861">
    <property type="entry name" value="IPNS-like_FE2OG_OXY"/>
</dbReference>
<dbReference type="InterPro" id="IPR027443">
    <property type="entry name" value="IPNS-like_sf"/>
</dbReference>
<dbReference type="InterPro" id="IPR050231">
    <property type="entry name" value="Iron_ascorbate_oxido_reductase"/>
</dbReference>
<dbReference type="InterPro" id="IPR005123">
    <property type="entry name" value="Oxoglu/Fe-dep_dioxygenase_dom"/>
</dbReference>
<dbReference type="PANTHER" id="PTHR47990">
    <property type="entry name" value="2-OXOGLUTARATE (2OG) AND FE(II)-DEPENDENT OXYGENASE SUPERFAMILY PROTEIN-RELATED"/>
    <property type="match status" value="1"/>
</dbReference>
<dbReference type="Pfam" id="PF03171">
    <property type="entry name" value="2OG-FeII_Oxy"/>
    <property type="match status" value="1"/>
</dbReference>
<dbReference type="Pfam" id="PF14226">
    <property type="entry name" value="DIOX_N"/>
    <property type="match status" value="1"/>
</dbReference>
<dbReference type="PRINTS" id="PR00682">
    <property type="entry name" value="IPNSYNTHASE"/>
</dbReference>
<dbReference type="SUPFAM" id="SSF51197">
    <property type="entry name" value="Clavaminate synthase-like"/>
    <property type="match status" value="1"/>
</dbReference>
<dbReference type="PROSITE" id="PS51471">
    <property type="entry name" value="FE2OG_OXY"/>
    <property type="match status" value="1"/>
</dbReference>
<name>G3OX3_ARATH</name>
<accession>Q9SVS8</accession>
<accession>A0MF88</accession>
<accession>Q1PE60</accession>
<reference key="1">
    <citation type="journal article" date="1999" name="Nature">
        <title>Sequence and analysis of chromosome 4 of the plant Arabidopsis thaliana.</title>
        <authorList>
            <person name="Mayer K.F.X."/>
            <person name="Schueller C."/>
            <person name="Wambutt R."/>
            <person name="Murphy G."/>
            <person name="Volckaert G."/>
            <person name="Pohl T."/>
            <person name="Duesterhoeft A."/>
            <person name="Stiekema W."/>
            <person name="Entian K.-D."/>
            <person name="Terryn N."/>
            <person name="Harris B."/>
            <person name="Ansorge W."/>
            <person name="Brandt P."/>
            <person name="Grivell L.A."/>
            <person name="Rieger M."/>
            <person name="Weichselgartner M."/>
            <person name="de Simone V."/>
            <person name="Obermaier B."/>
            <person name="Mache R."/>
            <person name="Mueller M."/>
            <person name="Kreis M."/>
            <person name="Delseny M."/>
            <person name="Puigdomenech P."/>
            <person name="Watson M."/>
            <person name="Schmidtheini T."/>
            <person name="Reichert B."/>
            <person name="Portetelle D."/>
            <person name="Perez-Alonso M."/>
            <person name="Boutry M."/>
            <person name="Bancroft I."/>
            <person name="Vos P."/>
            <person name="Hoheisel J."/>
            <person name="Zimmermann W."/>
            <person name="Wedler H."/>
            <person name="Ridley P."/>
            <person name="Langham S.-A."/>
            <person name="McCullagh B."/>
            <person name="Bilham L."/>
            <person name="Robben J."/>
            <person name="van der Schueren J."/>
            <person name="Grymonprez B."/>
            <person name="Chuang Y.-J."/>
            <person name="Vandenbussche F."/>
            <person name="Braeken M."/>
            <person name="Weltjens I."/>
            <person name="Voet M."/>
            <person name="Bastiaens I."/>
            <person name="Aert R."/>
            <person name="Defoor E."/>
            <person name="Weitzenegger T."/>
            <person name="Bothe G."/>
            <person name="Ramsperger U."/>
            <person name="Hilbert H."/>
            <person name="Braun M."/>
            <person name="Holzer E."/>
            <person name="Brandt A."/>
            <person name="Peters S."/>
            <person name="van Staveren M."/>
            <person name="Dirkse W."/>
            <person name="Mooijman P."/>
            <person name="Klein Lankhorst R."/>
            <person name="Rose M."/>
            <person name="Hauf J."/>
            <person name="Koetter P."/>
            <person name="Berneiser S."/>
            <person name="Hempel S."/>
            <person name="Feldpausch M."/>
            <person name="Lamberth S."/>
            <person name="Van den Daele H."/>
            <person name="De Keyser A."/>
            <person name="Buysshaert C."/>
            <person name="Gielen J."/>
            <person name="Villarroel R."/>
            <person name="De Clercq R."/>
            <person name="van Montagu M."/>
            <person name="Rogers J."/>
            <person name="Cronin A."/>
            <person name="Quail M.A."/>
            <person name="Bray-Allen S."/>
            <person name="Clark L."/>
            <person name="Doggett J."/>
            <person name="Hall S."/>
            <person name="Kay M."/>
            <person name="Lennard N."/>
            <person name="McLay K."/>
            <person name="Mayes R."/>
            <person name="Pettett A."/>
            <person name="Rajandream M.A."/>
            <person name="Lyne M."/>
            <person name="Benes V."/>
            <person name="Rechmann S."/>
            <person name="Borkova D."/>
            <person name="Bloecker H."/>
            <person name="Scharfe M."/>
            <person name="Grimm M."/>
            <person name="Loehnert T.-H."/>
            <person name="Dose S."/>
            <person name="de Haan M."/>
            <person name="Maarse A.C."/>
            <person name="Schaefer M."/>
            <person name="Mueller-Auer S."/>
            <person name="Gabel C."/>
            <person name="Fuchs M."/>
            <person name="Fartmann B."/>
            <person name="Granderath K."/>
            <person name="Dauner D."/>
            <person name="Herzl A."/>
            <person name="Neumann S."/>
            <person name="Argiriou A."/>
            <person name="Vitale D."/>
            <person name="Liguori R."/>
            <person name="Piravandi E."/>
            <person name="Massenet O."/>
            <person name="Quigley F."/>
            <person name="Clabauld G."/>
            <person name="Muendlein A."/>
            <person name="Felber R."/>
            <person name="Schnabl S."/>
            <person name="Hiller R."/>
            <person name="Schmidt W."/>
            <person name="Lecharny A."/>
            <person name="Aubourg S."/>
            <person name="Chefdor F."/>
            <person name="Cooke R."/>
            <person name="Berger C."/>
            <person name="Monfort A."/>
            <person name="Casacuberta E."/>
            <person name="Gibbons T."/>
            <person name="Weber N."/>
            <person name="Vandenbol M."/>
            <person name="Bargues M."/>
            <person name="Terol J."/>
            <person name="Torres A."/>
            <person name="Perez-Perez A."/>
            <person name="Purnelle B."/>
            <person name="Bent E."/>
            <person name="Johnson S."/>
            <person name="Tacon D."/>
            <person name="Jesse T."/>
            <person name="Heijnen L."/>
            <person name="Schwarz S."/>
            <person name="Scholler P."/>
            <person name="Heber S."/>
            <person name="Francs P."/>
            <person name="Bielke C."/>
            <person name="Frishman D."/>
            <person name="Haase D."/>
            <person name="Lemcke K."/>
            <person name="Mewes H.-W."/>
            <person name="Stocker S."/>
            <person name="Zaccaria P."/>
            <person name="Bevan M."/>
            <person name="Wilson R.K."/>
            <person name="de la Bastide M."/>
            <person name="Habermann K."/>
            <person name="Parnell L."/>
            <person name="Dedhia N."/>
            <person name="Gnoj L."/>
            <person name="Schutz K."/>
            <person name="Huang E."/>
            <person name="Spiegel L."/>
            <person name="Sekhon M."/>
            <person name="Murray J."/>
            <person name="Sheet P."/>
            <person name="Cordes M."/>
            <person name="Abu-Threideh J."/>
            <person name="Stoneking T."/>
            <person name="Kalicki J."/>
            <person name="Graves T."/>
            <person name="Harmon G."/>
            <person name="Edwards J."/>
            <person name="Latreille P."/>
            <person name="Courtney L."/>
            <person name="Cloud J."/>
            <person name="Abbott A."/>
            <person name="Scott K."/>
            <person name="Johnson D."/>
            <person name="Minx P."/>
            <person name="Bentley D."/>
            <person name="Fulton B."/>
            <person name="Miller N."/>
            <person name="Greco T."/>
            <person name="Kemp K."/>
            <person name="Kramer J."/>
            <person name="Fulton L."/>
            <person name="Mardis E."/>
            <person name="Dante M."/>
            <person name="Pepin K."/>
            <person name="Hillier L.W."/>
            <person name="Nelson J."/>
            <person name="Spieth J."/>
            <person name="Ryan E."/>
            <person name="Andrews S."/>
            <person name="Geisel C."/>
            <person name="Layman D."/>
            <person name="Du H."/>
            <person name="Ali J."/>
            <person name="Berghoff A."/>
            <person name="Jones K."/>
            <person name="Drone K."/>
            <person name="Cotton M."/>
            <person name="Joshu C."/>
            <person name="Antonoiu B."/>
            <person name="Zidanic M."/>
            <person name="Strong C."/>
            <person name="Sun H."/>
            <person name="Lamar B."/>
            <person name="Yordan C."/>
            <person name="Ma P."/>
            <person name="Zhong J."/>
            <person name="Preston R."/>
            <person name="Vil D."/>
            <person name="Shekher M."/>
            <person name="Matero A."/>
            <person name="Shah R."/>
            <person name="Swaby I.K."/>
            <person name="O'Shaughnessy A."/>
            <person name="Rodriguez M."/>
            <person name="Hoffman J."/>
            <person name="Till S."/>
            <person name="Granat S."/>
            <person name="Shohdy N."/>
            <person name="Hasegawa A."/>
            <person name="Hameed A."/>
            <person name="Lodhi M."/>
            <person name="Johnson A."/>
            <person name="Chen E."/>
            <person name="Marra M.A."/>
            <person name="Martienssen R."/>
            <person name="McCombie W.R."/>
        </authorList>
    </citation>
    <scope>NUCLEOTIDE SEQUENCE [LARGE SCALE GENOMIC DNA]</scope>
    <source>
        <strain>cv. Columbia</strain>
    </source>
</reference>
<reference key="2">
    <citation type="journal article" date="2017" name="Plant J.">
        <title>Araport11: a complete reannotation of the Arabidopsis thaliana reference genome.</title>
        <authorList>
            <person name="Cheng C.Y."/>
            <person name="Krishnakumar V."/>
            <person name="Chan A.P."/>
            <person name="Thibaud-Nissen F."/>
            <person name="Schobel S."/>
            <person name="Town C.D."/>
        </authorList>
    </citation>
    <scope>GENOME REANNOTATION</scope>
    <source>
        <strain>cv. Columbia</strain>
    </source>
</reference>
<reference key="3">
    <citation type="journal article" date="2006" name="Plant Biotechnol. J.">
        <title>Simultaneous high-throughput recombinational cloning of open reading frames in closed and open configurations.</title>
        <authorList>
            <person name="Underwood B.A."/>
            <person name="Vanderhaeghen R."/>
            <person name="Whitford R."/>
            <person name="Town C.D."/>
            <person name="Hilson P."/>
        </authorList>
    </citation>
    <scope>NUCLEOTIDE SEQUENCE [LARGE SCALE MRNA]</scope>
    <source>
        <strain>cv. Columbia</strain>
    </source>
</reference>
<reference key="4">
    <citation type="journal article" date="2006" name="Plant J.">
        <title>Distinct and overlapping roles of two gibberellin 3-oxidases in Arabidopsis development.</title>
        <authorList>
            <person name="Mitchum M.G."/>
            <person name="Yamaguchi S."/>
            <person name="Hanada A."/>
            <person name="Kuwahara A."/>
            <person name="Yoshioka Y."/>
            <person name="Kato T."/>
            <person name="Tabata S."/>
            <person name="Kamiya Y."/>
            <person name="Sun T.P."/>
        </authorList>
    </citation>
    <scope>FUNCTION</scope>
    <scope>TISSUE SPECIFICITY</scope>
</reference>
<reference key="5">
    <citation type="journal article" date="2007" name="Plant Physiol.">
        <title>AGF1, an AT-hook protein, is necessary for the negative feedback of AtGA3ox1 encoding GA 3-oxidase.</title>
        <authorList>
            <person name="Matsushita A."/>
            <person name="Furumoto T."/>
            <person name="Ishida S."/>
            <person name="Takahashi Y."/>
        </authorList>
    </citation>
    <scope>TISSUE SPECIFICITY</scope>
</reference>
<reference key="6">
    <citation type="journal article" date="2011" name="Gene">
        <title>Evolutionary analysis of three gibberellin oxidase genes in rice, Arabidopsis, and soybean.</title>
        <authorList>
            <person name="Han F."/>
            <person name="Zhu B."/>
        </authorList>
    </citation>
    <scope>GENE FAMILY</scope>
</reference>
<organism>
    <name type="scientific">Arabidopsis thaliana</name>
    <name type="common">Mouse-ear cress</name>
    <dbReference type="NCBI Taxonomy" id="3702"/>
    <lineage>
        <taxon>Eukaryota</taxon>
        <taxon>Viridiplantae</taxon>
        <taxon>Streptophyta</taxon>
        <taxon>Embryophyta</taxon>
        <taxon>Tracheophyta</taxon>
        <taxon>Spermatophyta</taxon>
        <taxon>Magnoliopsida</taxon>
        <taxon>eudicotyledons</taxon>
        <taxon>Gunneridae</taxon>
        <taxon>Pentapetalae</taxon>
        <taxon>rosids</taxon>
        <taxon>malvids</taxon>
        <taxon>Brassicales</taxon>
        <taxon>Brassicaceae</taxon>
        <taxon>Camelineae</taxon>
        <taxon>Arabidopsis</taxon>
    </lineage>
</organism>
<feature type="chain" id="PRO_0000067315" description="Gibberellin 3-beta-dioxygenase 3">
    <location>
        <begin position="1"/>
        <end position="349"/>
    </location>
</feature>
<feature type="domain" description="Fe2OG dioxygenase" evidence="3">
    <location>
        <begin position="201"/>
        <end position="305"/>
    </location>
</feature>
<feature type="active site" evidence="2">
    <location>
        <position position="296"/>
    </location>
</feature>
<feature type="binding site" evidence="3">
    <location>
        <position position="226"/>
    </location>
    <ligand>
        <name>Fe cation</name>
        <dbReference type="ChEBI" id="CHEBI:24875"/>
    </ligand>
</feature>
<feature type="binding site" evidence="3">
    <location>
        <position position="228"/>
    </location>
    <ligand>
        <name>Fe cation</name>
        <dbReference type="ChEBI" id="CHEBI:24875"/>
    </ligand>
</feature>
<feature type="binding site" evidence="3">
    <location>
        <position position="286"/>
    </location>
    <ligand>
        <name>Fe cation</name>
        <dbReference type="ChEBI" id="CHEBI:24875"/>
    </ligand>
</feature>
<evidence type="ECO:0000250" key="1"/>
<evidence type="ECO:0000255" key="2"/>
<evidence type="ECO:0000255" key="3">
    <source>
        <dbReference type="PROSITE-ProRule" id="PRU00805"/>
    </source>
</evidence>
<evidence type="ECO:0000269" key="4">
    <source>
    </source>
</evidence>
<evidence type="ECO:0000269" key="5">
    <source>
    </source>
</evidence>
<evidence type="ECO:0000305" key="6"/>
<gene>
    <name type="primary">GA3OX3</name>
    <name type="ordered locus">At4g21690</name>
    <name type="ORF">F17L22.150</name>
</gene>
<sequence length="349" mass="39211">MSSVTQLFKNNPVNRDRIIPLDFTNTKTLPDSHVWSKPEPETTSGPIPVISLSNPEEHGLLRQACEEWGVFHITDHGVSHSLLHNVDCQMKRLFSLPMHRKILAVRSPDESTGYGVVRISMFYDKLMWSEGFSVMGSSLRRHATLLWPDDHAEFCNVMEEYQKAMDDLSHRLISMLMGSLGLTHEDLGWLVPDKTGSGTDSIQSFLQLNSYPVCPDPHLAMGLAPHTDSSLLTILYQGNIPGLEIESPQEEGSRWIGVEPIEGSLVVIMGDLSHIISNGQFRSTMHRAVVNKTHHRVSAAYFAGPPKNLQIGPLTSDKNHPPIYRRLIWEEYLAAKATHFNKALTLFRC</sequence>
<comment type="function">
    <text evidence="4">Converts the inactive gibberellin (GA) precursors GA9 and GA20 in the bioactives gibberellins GA4 and GA1. Involved in the production of bioactive GA for reproductive development.</text>
</comment>
<comment type="catalytic activity">
    <reaction>
        <text>gibberellin A20 + 2-oxoglutarate + O2 = gibberellin A1 + succinate + CO2</text>
        <dbReference type="Rhea" id="RHEA:10104"/>
        <dbReference type="ChEBI" id="CHEBI:15379"/>
        <dbReference type="ChEBI" id="CHEBI:16526"/>
        <dbReference type="ChEBI" id="CHEBI:16810"/>
        <dbReference type="ChEBI" id="CHEBI:30031"/>
        <dbReference type="ChEBI" id="CHEBI:58524"/>
        <dbReference type="ChEBI" id="CHEBI:58526"/>
        <dbReference type="EC" id="1.14.11.15"/>
    </reaction>
</comment>
<comment type="cofactor">
    <cofactor evidence="1">
        <name>L-ascorbate</name>
        <dbReference type="ChEBI" id="CHEBI:38290"/>
    </cofactor>
</comment>
<comment type="cofactor">
    <cofactor evidence="1">
        <name>Fe cation</name>
        <dbReference type="ChEBI" id="CHEBI:24875"/>
    </cofactor>
</comment>
<comment type="pathway">
    <text>Plant hormone biosynthesis; gibberellin biosynthesis.</text>
</comment>
<comment type="tissue specificity">
    <text evidence="4 5">Expressed in flower clusters and siliques.</text>
</comment>
<comment type="similarity">
    <text evidence="6">Belongs to the iron/ascorbate-dependent oxidoreductase family. GA3OX subfamily.</text>
</comment>
<comment type="sequence caution" evidence="6">
    <conflict type="erroneous termination">
        <sequence resource="EMBL-CDS" id="ABK28643"/>
    </conflict>
    <text>Extended C-terminus.</text>
</comment>
<proteinExistence type="evidence at transcript level"/>
<protein>
    <recommendedName>
        <fullName>Gibberellin 3-beta-dioxygenase 3</fullName>
        <ecNumber>1.14.11.15</ecNumber>
    </recommendedName>
    <alternativeName>
        <fullName>GA 3-oxidase 3</fullName>
        <shortName>AtGA3ox3</shortName>
        <shortName>AtGA3ox4</shortName>
    </alternativeName>
    <alternativeName>
        <fullName>Gibberellin 3 beta-hydroxylase 3</fullName>
    </alternativeName>
</protein>
<keyword id="KW-0223">Dioxygenase</keyword>
<keyword id="KW-0408">Iron</keyword>
<keyword id="KW-0479">Metal-binding</keyword>
<keyword id="KW-0560">Oxidoreductase</keyword>
<keyword id="KW-1185">Reference proteome</keyword>